<feature type="chain" id="PRO_0000349570" description="tRNA-specific 2-thiouridylase MnmA">
    <location>
        <begin position="1"/>
        <end position="338"/>
    </location>
</feature>
<feature type="region of interest" description="Interaction with tRNA" evidence="1">
    <location>
        <begin position="134"/>
        <end position="136"/>
    </location>
</feature>
<feature type="region of interest" description="Interaction with tRNA" evidence="1">
    <location>
        <begin position="288"/>
        <end position="289"/>
    </location>
</feature>
<feature type="active site" description="Nucleophile" evidence="1">
    <location>
        <position position="92"/>
    </location>
</feature>
<feature type="active site" description="Cysteine persulfide intermediate" evidence="1">
    <location>
        <position position="186"/>
    </location>
</feature>
<feature type="binding site" evidence="1">
    <location>
        <begin position="6"/>
        <end position="13"/>
    </location>
    <ligand>
        <name>ATP</name>
        <dbReference type="ChEBI" id="CHEBI:30616"/>
    </ligand>
</feature>
<feature type="binding site" evidence="1">
    <location>
        <position position="32"/>
    </location>
    <ligand>
        <name>ATP</name>
        <dbReference type="ChEBI" id="CHEBI:30616"/>
    </ligand>
</feature>
<feature type="binding site" evidence="1">
    <location>
        <position position="116"/>
    </location>
    <ligand>
        <name>ATP</name>
        <dbReference type="ChEBI" id="CHEBI:30616"/>
    </ligand>
</feature>
<feature type="site" description="Interaction with tRNA" evidence="1">
    <location>
        <position position="117"/>
    </location>
</feature>
<feature type="site" description="Interaction with tRNA" evidence="1">
    <location>
        <position position="320"/>
    </location>
</feature>
<feature type="disulfide bond" description="Alternate" evidence="1">
    <location>
        <begin position="92"/>
        <end position="186"/>
    </location>
</feature>
<reference key="1">
    <citation type="submission" date="2006-11" db="EMBL/GenBank/DDBJ databases">
        <title>Sequence of Campylobacter fetus subsp. fetus 82-40.</title>
        <authorList>
            <person name="Fouts D.E."/>
            <person name="Nelson K.E."/>
        </authorList>
    </citation>
    <scope>NUCLEOTIDE SEQUENCE [LARGE SCALE GENOMIC DNA]</scope>
    <source>
        <strain>82-40</strain>
    </source>
</reference>
<comment type="function">
    <text evidence="1">Catalyzes the 2-thiolation of uridine at the wobble position (U34) of tRNA, leading to the formation of s(2)U34.</text>
</comment>
<comment type="catalytic activity">
    <reaction evidence="1">
        <text>S-sulfanyl-L-cysteinyl-[protein] + uridine(34) in tRNA + AH2 + ATP = 2-thiouridine(34) in tRNA + L-cysteinyl-[protein] + A + AMP + diphosphate + H(+)</text>
        <dbReference type="Rhea" id="RHEA:47032"/>
        <dbReference type="Rhea" id="RHEA-COMP:10131"/>
        <dbReference type="Rhea" id="RHEA-COMP:11726"/>
        <dbReference type="Rhea" id="RHEA-COMP:11727"/>
        <dbReference type="Rhea" id="RHEA-COMP:11728"/>
        <dbReference type="ChEBI" id="CHEBI:13193"/>
        <dbReference type="ChEBI" id="CHEBI:15378"/>
        <dbReference type="ChEBI" id="CHEBI:17499"/>
        <dbReference type="ChEBI" id="CHEBI:29950"/>
        <dbReference type="ChEBI" id="CHEBI:30616"/>
        <dbReference type="ChEBI" id="CHEBI:33019"/>
        <dbReference type="ChEBI" id="CHEBI:61963"/>
        <dbReference type="ChEBI" id="CHEBI:65315"/>
        <dbReference type="ChEBI" id="CHEBI:87170"/>
        <dbReference type="ChEBI" id="CHEBI:456215"/>
        <dbReference type="EC" id="2.8.1.13"/>
    </reaction>
</comment>
<comment type="subcellular location">
    <subcellularLocation>
        <location evidence="1">Cytoplasm</location>
    </subcellularLocation>
</comment>
<comment type="similarity">
    <text evidence="1">Belongs to the MnmA/TRMU family.</text>
</comment>
<sequence length="338" mass="37442">MKVLVALSGGVDSSMSAKYLLEAGYSVVGCYMKLHSKPGYHEENIRKVKKVGEFLGIETHILDLEEEFNAKVYEPFVNAYKEGLTPNPCAHCNKNIKFGALWKFAQTLGCDKMATGHYARIEDGLIKVASDLSKDQSYFLANISPEILPYIIFPLGDKFKVDIKAAAAQIPQIAELASQKESSEICFVETTYIDILNKHFNTLMPGVVRDVSGKVVGKHDGYMRYTIGKRKGFSVDGAHSPHYVLKIDAAKNEIVVGLKDELSSFSFTTTNFNNFTDKNELECFVKIRYRSTPIPCLVSKLDDGATVKLKDNAGGVASGQLAVFYDEFDRVLASGFIR</sequence>
<accession>A0RQY3</accession>
<proteinExistence type="inferred from homology"/>
<gene>
    <name evidence="1" type="primary">mnmA</name>
    <name type="ordered locus">CFF8240_1482</name>
</gene>
<organism>
    <name type="scientific">Campylobacter fetus subsp. fetus (strain 82-40)</name>
    <dbReference type="NCBI Taxonomy" id="360106"/>
    <lineage>
        <taxon>Bacteria</taxon>
        <taxon>Pseudomonadati</taxon>
        <taxon>Campylobacterota</taxon>
        <taxon>Epsilonproteobacteria</taxon>
        <taxon>Campylobacterales</taxon>
        <taxon>Campylobacteraceae</taxon>
        <taxon>Campylobacter</taxon>
    </lineage>
</organism>
<protein>
    <recommendedName>
        <fullName evidence="1">tRNA-specific 2-thiouridylase MnmA</fullName>
        <ecNumber evidence="1">2.8.1.13</ecNumber>
    </recommendedName>
</protein>
<evidence type="ECO:0000255" key="1">
    <source>
        <dbReference type="HAMAP-Rule" id="MF_00144"/>
    </source>
</evidence>
<name>MNMA_CAMFF</name>
<dbReference type="EC" id="2.8.1.13" evidence="1"/>
<dbReference type="EMBL" id="CP000487">
    <property type="protein sequence ID" value="ABK82199.1"/>
    <property type="molecule type" value="Genomic_DNA"/>
</dbReference>
<dbReference type="RefSeq" id="WP_002850468.1">
    <property type="nucleotide sequence ID" value="NC_008599.1"/>
</dbReference>
<dbReference type="SMR" id="A0RQY3"/>
<dbReference type="GeneID" id="61065299"/>
<dbReference type="KEGG" id="cff:CFF8240_1482"/>
<dbReference type="eggNOG" id="COG0482">
    <property type="taxonomic scope" value="Bacteria"/>
</dbReference>
<dbReference type="HOGENOM" id="CLU_035188_0_0_7"/>
<dbReference type="Proteomes" id="UP000000760">
    <property type="component" value="Chromosome"/>
</dbReference>
<dbReference type="GO" id="GO:0005737">
    <property type="term" value="C:cytoplasm"/>
    <property type="evidence" value="ECO:0007669"/>
    <property type="project" value="UniProtKB-SubCell"/>
</dbReference>
<dbReference type="GO" id="GO:0005524">
    <property type="term" value="F:ATP binding"/>
    <property type="evidence" value="ECO:0007669"/>
    <property type="project" value="UniProtKB-KW"/>
</dbReference>
<dbReference type="GO" id="GO:0000049">
    <property type="term" value="F:tRNA binding"/>
    <property type="evidence" value="ECO:0007669"/>
    <property type="project" value="UniProtKB-KW"/>
</dbReference>
<dbReference type="GO" id="GO:0103016">
    <property type="term" value="F:tRNA-uridine 2-sulfurtransferase activity"/>
    <property type="evidence" value="ECO:0007669"/>
    <property type="project" value="UniProtKB-EC"/>
</dbReference>
<dbReference type="GO" id="GO:0002143">
    <property type="term" value="P:tRNA wobble position uridine thiolation"/>
    <property type="evidence" value="ECO:0007669"/>
    <property type="project" value="TreeGrafter"/>
</dbReference>
<dbReference type="CDD" id="cd01998">
    <property type="entry name" value="MnmA_TRMU-like"/>
    <property type="match status" value="1"/>
</dbReference>
<dbReference type="FunFam" id="2.30.30.280:FF:000001">
    <property type="entry name" value="tRNA-specific 2-thiouridylase MnmA"/>
    <property type="match status" value="1"/>
</dbReference>
<dbReference type="Gene3D" id="2.30.30.280">
    <property type="entry name" value="Adenine nucleotide alpha hydrolases-like domains"/>
    <property type="match status" value="1"/>
</dbReference>
<dbReference type="Gene3D" id="3.40.50.620">
    <property type="entry name" value="HUPs"/>
    <property type="match status" value="1"/>
</dbReference>
<dbReference type="Gene3D" id="2.40.30.10">
    <property type="entry name" value="Translation factors"/>
    <property type="match status" value="1"/>
</dbReference>
<dbReference type="HAMAP" id="MF_00144">
    <property type="entry name" value="tRNA_thiouridyl_MnmA"/>
    <property type="match status" value="1"/>
</dbReference>
<dbReference type="InterPro" id="IPR004506">
    <property type="entry name" value="MnmA-like"/>
</dbReference>
<dbReference type="InterPro" id="IPR046885">
    <property type="entry name" value="MnmA-like_C"/>
</dbReference>
<dbReference type="InterPro" id="IPR046884">
    <property type="entry name" value="MnmA-like_central"/>
</dbReference>
<dbReference type="InterPro" id="IPR023382">
    <property type="entry name" value="MnmA-like_central_sf"/>
</dbReference>
<dbReference type="InterPro" id="IPR014729">
    <property type="entry name" value="Rossmann-like_a/b/a_fold"/>
</dbReference>
<dbReference type="NCBIfam" id="NF001138">
    <property type="entry name" value="PRK00143.1"/>
    <property type="match status" value="1"/>
</dbReference>
<dbReference type="NCBIfam" id="TIGR00420">
    <property type="entry name" value="trmU"/>
    <property type="match status" value="1"/>
</dbReference>
<dbReference type="PANTHER" id="PTHR11933:SF5">
    <property type="entry name" value="MITOCHONDRIAL TRNA-SPECIFIC 2-THIOURIDYLASE 1"/>
    <property type="match status" value="1"/>
</dbReference>
<dbReference type="PANTHER" id="PTHR11933">
    <property type="entry name" value="TRNA 5-METHYLAMINOMETHYL-2-THIOURIDYLATE -METHYLTRANSFERASE"/>
    <property type="match status" value="1"/>
</dbReference>
<dbReference type="Pfam" id="PF03054">
    <property type="entry name" value="tRNA_Me_trans"/>
    <property type="match status" value="1"/>
</dbReference>
<dbReference type="Pfam" id="PF20258">
    <property type="entry name" value="tRNA_Me_trans_C"/>
    <property type="match status" value="1"/>
</dbReference>
<dbReference type="Pfam" id="PF20259">
    <property type="entry name" value="tRNA_Me_trans_M"/>
    <property type="match status" value="1"/>
</dbReference>
<dbReference type="SUPFAM" id="SSF52402">
    <property type="entry name" value="Adenine nucleotide alpha hydrolases-like"/>
    <property type="match status" value="1"/>
</dbReference>
<keyword id="KW-0067">ATP-binding</keyword>
<keyword id="KW-0963">Cytoplasm</keyword>
<keyword id="KW-1015">Disulfide bond</keyword>
<keyword id="KW-0547">Nucleotide-binding</keyword>
<keyword id="KW-0694">RNA-binding</keyword>
<keyword id="KW-0808">Transferase</keyword>
<keyword id="KW-0819">tRNA processing</keyword>
<keyword id="KW-0820">tRNA-binding</keyword>